<sequence length="73" mass="8237">MNFLLSKLLLGLIRFYQYCISPLIPPRCRYTPTCSQYAVEAVKKYGAFKGGRLAIKRIARCHPFGGHGHDPVP</sequence>
<name>YIDD_NEIMB</name>
<feature type="chain" id="PRO_0000171844" description="Putative membrane protein insertion efficiency factor">
    <location>
        <begin position="1"/>
        <end position="73"/>
    </location>
</feature>
<evidence type="ECO:0000255" key="1">
    <source>
        <dbReference type="HAMAP-Rule" id="MF_00386"/>
    </source>
</evidence>
<comment type="function">
    <text evidence="1">Could be involved in insertion of integral membrane proteins into the membrane.</text>
</comment>
<comment type="subcellular location">
    <subcellularLocation>
        <location evidence="1">Cell inner membrane</location>
        <topology evidence="1">Peripheral membrane protein</topology>
        <orientation evidence="1">Cytoplasmic side</orientation>
    </subcellularLocation>
</comment>
<comment type="similarity">
    <text evidence="1">Belongs to the UPF0161 family.</text>
</comment>
<gene>
    <name type="ordered locus">NMB1906</name>
</gene>
<accession>P67303</accession>
<accession>Q9JW47</accession>
<accession>Q9JXS5</accession>
<keyword id="KW-0997">Cell inner membrane</keyword>
<keyword id="KW-1003">Cell membrane</keyword>
<keyword id="KW-0472">Membrane</keyword>
<keyword id="KW-1185">Reference proteome</keyword>
<dbReference type="EMBL" id="AE002098">
    <property type="protein sequence ID" value="AAF42236.1"/>
    <property type="molecule type" value="Genomic_DNA"/>
</dbReference>
<dbReference type="PIR" id="A81028">
    <property type="entry name" value="A81028"/>
</dbReference>
<dbReference type="RefSeq" id="NP_274900.1">
    <property type="nucleotide sequence ID" value="NC_003112.2"/>
</dbReference>
<dbReference type="FunCoup" id="P67303">
    <property type="interactions" value="242"/>
</dbReference>
<dbReference type="STRING" id="122586.NMB1906"/>
<dbReference type="PaxDb" id="122586-NMB1906"/>
<dbReference type="KEGG" id="nme:NMB1906"/>
<dbReference type="PATRIC" id="fig|122586.8.peg.2432"/>
<dbReference type="HOGENOM" id="CLU_144811_6_1_4"/>
<dbReference type="InParanoid" id="P67303"/>
<dbReference type="OrthoDB" id="9801753at2"/>
<dbReference type="Proteomes" id="UP000000425">
    <property type="component" value="Chromosome"/>
</dbReference>
<dbReference type="GO" id="GO:0005886">
    <property type="term" value="C:plasma membrane"/>
    <property type="evidence" value="ECO:0007669"/>
    <property type="project" value="UniProtKB-SubCell"/>
</dbReference>
<dbReference type="HAMAP" id="MF_00386">
    <property type="entry name" value="UPF0161_YidD"/>
    <property type="match status" value="1"/>
</dbReference>
<dbReference type="InterPro" id="IPR002696">
    <property type="entry name" value="Membr_insert_effic_factor_YidD"/>
</dbReference>
<dbReference type="NCBIfam" id="TIGR00278">
    <property type="entry name" value="membrane protein insertion efficiency factor YidD"/>
    <property type="match status" value="1"/>
</dbReference>
<dbReference type="PANTHER" id="PTHR33383">
    <property type="entry name" value="MEMBRANE PROTEIN INSERTION EFFICIENCY FACTOR-RELATED"/>
    <property type="match status" value="1"/>
</dbReference>
<dbReference type="PANTHER" id="PTHR33383:SF1">
    <property type="entry name" value="MEMBRANE PROTEIN INSERTION EFFICIENCY FACTOR-RELATED"/>
    <property type="match status" value="1"/>
</dbReference>
<dbReference type="Pfam" id="PF01809">
    <property type="entry name" value="YidD"/>
    <property type="match status" value="1"/>
</dbReference>
<dbReference type="SMART" id="SM01234">
    <property type="entry name" value="Haemolytic"/>
    <property type="match status" value="1"/>
</dbReference>
<reference key="1">
    <citation type="journal article" date="2000" name="Science">
        <title>Complete genome sequence of Neisseria meningitidis serogroup B strain MC58.</title>
        <authorList>
            <person name="Tettelin H."/>
            <person name="Saunders N.J."/>
            <person name="Heidelberg J.F."/>
            <person name="Jeffries A.C."/>
            <person name="Nelson K.E."/>
            <person name="Eisen J.A."/>
            <person name="Ketchum K.A."/>
            <person name="Hood D.W."/>
            <person name="Peden J.F."/>
            <person name="Dodson R.J."/>
            <person name="Nelson W.C."/>
            <person name="Gwinn M.L."/>
            <person name="DeBoy R.T."/>
            <person name="Peterson J.D."/>
            <person name="Hickey E.K."/>
            <person name="Haft D.H."/>
            <person name="Salzberg S.L."/>
            <person name="White O."/>
            <person name="Fleischmann R.D."/>
            <person name="Dougherty B.A."/>
            <person name="Mason T.M."/>
            <person name="Ciecko A."/>
            <person name="Parksey D.S."/>
            <person name="Blair E."/>
            <person name="Cittone H."/>
            <person name="Clark E.B."/>
            <person name="Cotton M.D."/>
            <person name="Utterback T.R."/>
            <person name="Khouri H.M."/>
            <person name="Qin H."/>
            <person name="Vamathevan J.J."/>
            <person name="Gill J."/>
            <person name="Scarlato V."/>
            <person name="Masignani V."/>
            <person name="Pizza M."/>
            <person name="Grandi G."/>
            <person name="Sun L."/>
            <person name="Smith H.O."/>
            <person name="Fraser C.M."/>
            <person name="Moxon E.R."/>
            <person name="Rappuoli R."/>
            <person name="Venter J.C."/>
        </authorList>
    </citation>
    <scope>NUCLEOTIDE SEQUENCE [LARGE SCALE GENOMIC DNA]</scope>
    <source>
        <strain>ATCC BAA-335 / MC58</strain>
    </source>
</reference>
<protein>
    <recommendedName>
        <fullName evidence="1">Putative membrane protein insertion efficiency factor</fullName>
    </recommendedName>
</protein>
<proteinExistence type="inferred from homology"/>
<organism>
    <name type="scientific">Neisseria meningitidis serogroup B (strain ATCC BAA-335 / MC58)</name>
    <dbReference type="NCBI Taxonomy" id="122586"/>
    <lineage>
        <taxon>Bacteria</taxon>
        <taxon>Pseudomonadati</taxon>
        <taxon>Pseudomonadota</taxon>
        <taxon>Betaproteobacteria</taxon>
        <taxon>Neisseriales</taxon>
        <taxon>Neisseriaceae</taxon>
        <taxon>Neisseria</taxon>
    </lineage>
</organism>